<evidence type="ECO:0000255" key="1">
    <source>
        <dbReference type="HAMAP-Rule" id="MF_00693"/>
    </source>
</evidence>
<accession>Q15YF9</accession>
<dbReference type="EMBL" id="CP000388">
    <property type="protein sequence ID" value="ABG39079.1"/>
    <property type="molecule type" value="Genomic_DNA"/>
</dbReference>
<dbReference type="RefSeq" id="WP_011573459.1">
    <property type="nucleotide sequence ID" value="NC_008228.1"/>
</dbReference>
<dbReference type="SMR" id="Q15YF9"/>
<dbReference type="STRING" id="342610.Patl_0550"/>
<dbReference type="KEGG" id="pat:Patl_0550"/>
<dbReference type="eggNOG" id="COG0217">
    <property type="taxonomic scope" value="Bacteria"/>
</dbReference>
<dbReference type="HOGENOM" id="CLU_062974_2_0_6"/>
<dbReference type="OrthoDB" id="9781053at2"/>
<dbReference type="Proteomes" id="UP000001981">
    <property type="component" value="Chromosome"/>
</dbReference>
<dbReference type="GO" id="GO:0005829">
    <property type="term" value="C:cytosol"/>
    <property type="evidence" value="ECO:0007669"/>
    <property type="project" value="TreeGrafter"/>
</dbReference>
<dbReference type="GO" id="GO:0003677">
    <property type="term" value="F:DNA binding"/>
    <property type="evidence" value="ECO:0007669"/>
    <property type="project" value="UniProtKB-UniRule"/>
</dbReference>
<dbReference type="GO" id="GO:0006355">
    <property type="term" value="P:regulation of DNA-templated transcription"/>
    <property type="evidence" value="ECO:0007669"/>
    <property type="project" value="UniProtKB-UniRule"/>
</dbReference>
<dbReference type="Gene3D" id="1.10.10.200">
    <property type="match status" value="1"/>
</dbReference>
<dbReference type="Gene3D" id="3.30.70.980">
    <property type="match status" value="2"/>
</dbReference>
<dbReference type="HAMAP" id="MF_00693">
    <property type="entry name" value="Transcrip_reg_TACO1"/>
    <property type="match status" value="1"/>
</dbReference>
<dbReference type="InterPro" id="IPR017856">
    <property type="entry name" value="Integrase-like_N"/>
</dbReference>
<dbReference type="InterPro" id="IPR048300">
    <property type="entry name" value="TACO1_YebC-like_2nd/3rd_dom"/>
</dbReference>
<dbReference type="InterPro" id="IPR049083">
    <property type="entry name" value="TACO1_YebC_N"/>
</dbReference>
<dbReference type="InterPro" id="IPR002876">
    <property type="entry name" value="Transcrip_reg_TACO1-like"/>
</dbReference>
<dbReference type="InterPro" id="IPR026564">
    <property type="entry name" value="Transcrip_reg_TACO1-like_dom3"/>
</dbReference>
<dbReference type="InterPro" id="IPR029072">
    <property type="entry name" value="YebC-like"/>
</dbReference>
<dbReference type="NCBIfam" id="NF009044">
    <property type="entry name" value="PRK12378.1"/>
    <property type="match status" value="1"/>
</dbReference>
<dbReference type="PANTHER" id="PTHR12532">
    <property type="entry name" value="TRANSLATIONAL ACTIVATOR OF CYTOCHROME C OXIDASE 1"/>
    <property type="match status" value="1"/>
</dbReference>
<dbReference type="PANTHER" id="PTHR12532:SF0">
    <property type="entry name" value="TRANSLATIONAL ACTIVATOR OF CYTOCHROME C OXIDASE 1"/>
    <property type="match status" value="1"/>
</dbReference>
<dbReference type="Pfam" id="PF20772">
    <property type="entry name" value="TACO1_YebC_N"/>
    <property type="match status" value="1"/>
</dbReference>
<dbReference type="Pfam" id="PF01709">
    <property type="entry name" value="Transcrip_reg"/>
    <property type="match status" value="1"/>
</dbReference>
<dbReference type="SUPFAM" id="SSF75625">
    <property type="entry name" value="YebC-like"/>
    <property type="match status" value="1"/>
</dbReference>
<comment type="subcellular location">
    <subcellularLocation>
        <location evidence="1">Cytoplasm</location>
    </subcellularLocation>
</comment>
<comment type="similarity">
    <text evidence="1">Belongs to the TACO1 family.</text>
</comment>
<protein>
    <recommendedName>
        <fullName evidence="1">Probable transcriptional regulatory protein Patl_0550</fullName>
    </recommendedName>
</protein>
<organism>
    <name type="scientific">Pseudoalteromonas atlantica (strain T6c / ATCC BAA-1087)</name>
    <dbReference type="NCBI Taxonomy" id="3042615"/>
    <lineage>
        <taxon>Bacteria</taxon>
        <taxon>Pseudomonadati</taxon>
        <taxon>Pseudomonadota</taxon>
        <taxon>Gammaproteobacteria</taxon>
        <taxon>Alteromonadales</taxon>
        <taxon>Alteromonadaceae</taxon>
        <taxon>Paraglaciecola</taxon>
    </lineage>
</organism>
<reference key="1">
    <citation type="submission" date="2006-06" db="EMBL/GenBank/DDBJ databases">
        <title>Complete sequence of Pseudoalteromonas atlantica T6c.</title>
        <authorList>
            <consortium name="US DOE Joint Genome Institute"/>
            <person name="Copeland A."/>
            <person name="Lucas S."/>
            <person name="Lapidus A."/>
            <person name="Barry K."/>
            <person name="Detter J.C."/>
            <person name="Glavina del Rio T."/>
            <person name="Hammon N."/>
            <person name="Israni S."/>
            <person name="Dalin E."/>
            <person name="Tice H."/>
            <person name="Pitluck S."/>
            <person name="Saunders E."/>
            <person name="Brettin T."/>
            <person name="Bruce D."/>
            <person name="Han C."/>
            <person name="Tapia R."/>
            <person name="Gilna P."/>
            <person name="Schmutz J."/>
            <person name="Larimer F."/>
            <person name="Land M."/>
            <person name="Hauser L."/>
            <person name="Kyrpides N."/>
            <person name="Kim E."/>
            <person name="Karls A.C."/>
            <person name="Bartlett D."/>
            <person name="Higgins B.P."/>
            <person name="Richardson P."/>
        </authorList>
    </citation>
    <scope>NUCLEOTIDE SEQUENCE [LARGE SCALE GENOMIC DNA]</scope>
    <source>
        <strain>T6c / ATCC BAA-1087</strain>
    </source>
</reference>
<sequence length="243" mass="26802">MGRKFEVRKVAMAKTAGAKTKVYSKYGKEIYMVAKNGGTDPQANLSLRRLIDKAKKDQVPSHVIDKAIDKAAGGAGEDFTPARYEGFGPGGCMVIVDCLTDNNNRTITDVRNCFTKTNSKIGVTGTVSHMFDHQAVFSFPGDDEDAVLEVLMEADVDVTEVECEEGVITVFAPHTEYFKTRTALTDNNPELEFDADEITFVPQTETVVTGEDVATFDKFMDMLEDCDDVQDVYHNAVVEREGE</sequence>
<name>Y550_PSEA6</name>
<proteinExistence type="inferred from homology"/>
<gene>
    <name type="ordered locus">Patl_0550</name>
</gene>
<keyword id="KW-0963">Cytoplasm</keyword>
<keyword id="KW-0238">DNA-binding</keyword>
<keyword id="KW-0804">Transcription</keyword>
<keyword id="KW-0805">Transcription regulation</keyword>
<feature type="chain" id="PRO_1000045357" description="Probable transcriptional regulatory protein Patl_0550">
    <location>
        <begin position="1"/>
        <end position="243"/>
    </location>
</feature>